<feature type="chain" id="PRO_0000235821" description="Calmodulin-binding transcription activator 2">
    <location>
        <begin position="1"/>
        <end position="1202"/>
    </location>
</feature>
<feature type="domain" description="IPT/TIG">
    <location>
        <begin position="537"/>
        <end position="615"/>
    </location>
</feature>
<feature type="repeat" description="ANK 1">
    <location>
        <begin position="712"/>
        <end position="745"/>
    </location>
</feature>
<feature type="repeat" description="ANK 2">
    <location>
        <begin position="757"/>
        <end position="787"/>
    </location>
</feature>
<feature type="repeat" description="ANK 3">
    <location>
        <begin position="791"/>
        <end position="821"/>
    </location>
</feature>
<feature type="domain" description="IQ 1" evidence="1">
    <location>
        <begin position="1049"/>
        <end position="1078"/>
    </location>
</feature>
<feature type="domain" description="IQ 2" evidence="1">
    <location>
        <begin position="1102"/>
        <end position="1131"/>
    </location>
</feature>
<feature type="DNA-binding region" description="CG-1" evidence="2">
    <location>
        <begin position="30"/>
        <end position="155"/>
    </location>
</feature>
<feature type="region of interest" description="Disordered" evidence="3">
    <location>
        <begin position="263"/>
        <end position="322"/>
    </location>
</feature>
<feature type="region of interest" description="Disordered" evidence="3">
    <location>
        <begin position="361"/>
        <end position="409"/>
    </location>
</feature>
<feature type="region of interest" description="Disordered" evidence="3">
    <location>
        <begin position="421"/>
        <end position="491"/>
    </location>
</feature>
<feature type="region of interest" description="Disordered" evidence="3">
    <location>
        <begin position="817"/>
        <end position="874"/>
    </location>
</feature>
<feature type="region of interest" description="Disordered" evidence="3">
    <location>
        <begin position="906"/>
        <end position="929"/>
    </location>
</feature>
<feature type="short sequence motif" description="Nuclear localization signal" evidence="2">
    <location>
        <begin position="79"/>
        <end position="86"/>
    </location>
</feature>
<feature type="compositionally biased region" description="Pro residues" evidence="3">
    <location>
        <begin position="270"/>
        <end position="283"/>
    </location>
</feature>
<feature type="compositionally biased region" description="Low complexity" evidence="3">
    <location>
        <begin position="289"/>
        <end position="299"/>
    </location>
</feature>
<feature type="compositionally biased region" description="Low complexity" evidence="3">
    <location>
        <begin position="313"/>
        <end position="322"/>
    </location>
</feature>
<feature type="compositionally biased region" description="Pro residues" evidence="3">
    <location>
        <begin position="365"/>
        <end position="374"/>
    </location>
</feature>
<feature type="compositionally biased region" description="Pro residues" evidence="3">
    <location>
        <begin position="460"/>
        <end position="476"/>
    </location>
</feature>
<feature type="compositionally biased region" description="Low complexity" evidence="3">
    <location>
        <begin position="826"/>
        <end position="846"/>
    </location>
</feature>
<feature type="compositionally biased region" description="Low complexity" evidence="3">
    <location>
        <begin position="906"/>
        <end position="917"/>
    </location>
</feature>
<feature type="splice variant" id="VSP_018489" description="In isoform 5." evidence="9">
    <location>
        <begin position="1"/>
        <end position="873"/>
    </location>
</feature>
<feature type="splice variant" id="VSP_018490" description="In isoform 3." evidence="10">
    <original>MNTKDTTEVA</original>
    <variation>MAAAAVTRGTPG</variation>
    <location>
        <begin position="1"/>
        <end position="10"/>
    </location>
</feature>
<feature type="splice variant" id="VSP_018491" description="In isoform 4 and isoform 6." evidence="9 10">
    <original>M</original>
    <variation>MGTDSPSPRPLRPGVTLPPGALTM</variation>
    <location>
        <position position="1"/>
    </location>
</feature>
<feature type="splice variant" id="VSP_018492" description="In isoform 4." evidence="10">
    <location>
        <begin position="114"/>
        <end position="137"/>
    </location>
</feature>
<feature type="splice variant" id="VSP_018493" description="In isoform 2 and isoform 3." evidence="9 10">
    <location>
        <begin position="1088"/>
        <end position="1094"/>
    </location>
</feature>
<feature type="splice variant" id="VSP_046059" description="In isoform 6." evidence="9">
    <original>GSFLTKKQDQAARKIMRFLRRCRHRMRELKQNQELEGLPQPGLAT</original>
    <variation>LLSHQEAGPGSPEDHEIPAALPTQDEGTEAEPGAGRASPAGTGHMTWPPPFSPPWGRLVQS</variation>
    <location>
        <begin position="1158"/>
        <end position="1202"/>
    </location>
</feature>
<feature type="sequence variant" id="VAR_026417" description="In dbSNP:rs238234." evidence="4 7 8">
    <original>A</original>
    <variation>P</variation>
    <location>
        <position position="267"/>
    </location>
</feature>
<feature type="sequence variant" id="VAR_026418" description="In dbSNP:rs16942615." evidence="4 7">
    <original>S</original>
    <variation>P</variation>
    <location>
        <position position="903"/>
    </location>
</feature>
<feature type="sequence conflict" description="In Ref. 2; CAD38818." evidence="11" ref="2">
    <original>D</original>
    <variation>G</variation>
    <location>
        <position position="140"/>
    </location>
</feature>
<feature type="sequence conflict" description="In Ref. 2; CAD38818." evidence="11" ref="2">
    <original>A</original>
    <variation>V</variation>
    <location>
        <position position="682"/>
    </location>
</feature>
<feature type="sequence conflict" description="In Ref. 2; CAD38818." evidence="11" ref="2">
    <original>V</original>
    <variation>L</variation>
    <location>
        <position position="688"/>
    </location>
</feature>
<feature type="sequence conflict" description="In Ref. 2; CAD38818." evidence="11" ref="2">
    <original>S</original>
    <variation>P</variation>
    <location>
        <position position="788"/>
    </location>
</feature>
<feature type="sequence conflict" description="In Ref. 2; CAD38818." evidence="11" ref="2">
    <original>F</original>
    <variation>S</variation>
    <location>
        <position position="1175"/>
    </location>
</feature>
<name>CMTA2_HUMAN</name>
<comment type="function">
    <text evidence="5">Transcription activator. May act as tumor suppressor.</text>
</comment>
<comment type="subunit">
    <text evidence="11">May interact with calmodulin.</text>
</comment>
<comment type="interaction">
    <interactant intactId="EBI-936534">
        <id>O94983</id>
    </interactant>
    <interactant intactId="EBI-297021">
        <id>P42582</id>
        <label>Nkx2-5</label>
    </interactant>
    <organismsDiffer>true</organismsDiffer>
    <experiments>2</experiments>
</comment>
<comment type="interaction">
    <interactant intactId="EBI-10176008">
        <id>O94983-5</id>
    </interactant>
    <interactant intactId="EBI-1049597">
        <id>P27797</id>
        <label>CALR</label>
    </interactant>
    <organismsDiffer>false</organismsDiffer>
    <experiments>3</experiments>
</comment>
<comment type="interaction">
    <interactant intactId="EBI-10176008">
        <id>O94983-5</id>
    </interactant>
    <interactant intactId="EBI-727477">
        <id>P12830</id>
        <label>CDH1</label>
    </interactant>
    <organismsDiffer>false</organismsDiffer>
    <experiments>3</experiments>
</comment>
<comment type="interaction">
    <interactant intactId="EBI-10176008">
        <id>O94983-5</id>
    </interactant>
    <interactant intactId="EBI-746189">
        <id>Q15078</id>
        <label>CDK5R1</label>
    </interactant>
    <organismsDiffer>false</organismsDiffer>
    <experiments>3</experiments>
</comment>
<comment type="interaction">
    <interactant intactId="EBI-10176008">
        <id>O94983-5</id>
    </interactant>
    <interactant intactId="EBI-351007">
        <id>P36957</id>
        <label>DLST</label>
    </interactant>
    <organismsDiffer>false</organismsDiffer>
    <experiments>3</experiments>
</comment>
<comment type="interaction">
    <interactant intactId="EBI-10176008">
        <id>O94983-5</id>
    </interactant>
    <interactant intactId="EBI-10171450">
        <id>B4DJ51</id>
        <label>HEL-S-72</label>
    </interactant>
    <organismsDiffer>false</organismsDiffer>
    <experiments>5</experiments>
</comment>
<comment type="interaction">
    <interactant intactId="EBI-10176008">
        <id>O94983-5</id>
    </interactant>
    <interactant intactId="EBI-1045155">
        <id>P43360</id>
        <label>MAGEA6</label>
    </interactant>
    <organismsDiffer>false</organismsDiffer>
    <experiments>3</experiments>
</comment>
<comment type="interaction">
    <interactant intactId="EBI-10176008">
        <id>O94983-5</id>
    </interactant>
    <interactant intactId="EBI-1104564">
        <id>Q9Y316</id>
        <label>MEMO1</label>
    </interactant>
    <organismsDiffer>false</organismsDiffer>
    <experiments>3</experiments>
</comment>
<comment type="interaction">
    <interactant intactId="EBI-10176008">
        <id>O94983-5</id>
    </interactant>
    <interactant intactId="EBI-1055945">
        <id>Q8TDX7</id>
        <label>NEK7</label>
    </interactant>
    <organismsDiffer>false</organismsDiffer>
    <experiments>3</experiments>
</comment>
<comment type="interaction">
    <interactant intactId="EBI-10176008">
        <id>O94983-5</id>
    </interactant>
    <interactant intactId="EBI-10196963">
        <id>Q6P088</id>
        <label>ZNF483</label>
    </interactant>
    <organismsDiffer>false</organismsDiffer>
    <experiments>3</experiments>
</comment>
<comment type="subcellular location">
    <subcellularLocation>
        <location evidence="12">Nucleus</location>
    </subcellularLocation>
</comment>
<comment type="alternative products">
    <event type="alternative splicing"/>
    <isoform>
        <id>O94983-1</id>
        <name>1</name>
        <sequence type="displayed"/>
    </isoform>
    <isoform>
        <id>O94983-2</id>
        <name>2</name>
        <sequence type="described" ref="VSP_018493"/>
    </isoform>
    <isoform>
        <id>O94983-3</id>
        <name>3</name>
        <sequence type="described" ref="VSP_018490 VSP_018493"/>
    </isoform>
    <isoform>
        <id>O94983-4</id>
        <name>4</name>
        <sequence type="described" ref="VSP_018491 VSP_018492"/>
    </isoform>
    <isoform>
        <id>O94983-5</id>
        <name>5</name>
        <sequence type="described" ref="VSP_018489"/>
    </isoform>
    <isoform>
        <id>O94983-6</id>
        <name>6</name>
        <sequence type="described" ref="VSP_018491 VSP_046059"/>
    </isoform>
</comment>
<comment type="tissue specificity">
    <text evidence="5 6">Detected in brain. Expressed at constant levels throughout the cell cycle in neuroblastoma cell lines.</text>
</comment>
<comment type="similarity">
    <text evidence="11">Belongs to the CAMTA family.</text>
</comment>
<comment type="sequence caution" evidence="11">
    <conflict type="frameshift">
        <sequence resource="EMBL-CDS" id="AAH16163"/>
    </conflict>
</comment>
<comment type="sequence caution" evidence="11">
    <conflict type="erroneous initiation">
        <sequence resource="EMBL-CDS" id="BAA74932"/>
    </conflict>
</comment>
<organism>
    <name type="scientific">Homo sapiens</name>
    <name type="common">Human</name>
    <dbReference type="NCBI Taxonomy" id="9606"/>
    <lineage>
        <taxon>Eukaryota</taxon>
        <taxon>Metazoa</taxon>
        <taxon>Chordata</taxon>
        <taxon>Craniata</taxon>
        <taxon>Vertebrata</taxon>
        <taxon>Euteleostomi</taxon>
        <taxon>Mammalia</taxon>
        <taxon>Eutheria</taxon>
        <taxon>Euarchontoglires</taxon>
        <taxon>Primates</taxon>
        <taxon>Haplorrhini</taxon>
        <taxon>Catarrhini</taxon>
        <taxon>Hominidae</taxon>
        <taxon>Homo</taxon>
    </lineage>
</organism>
<keyword id="KW-0010">Activator</keyword>
<keyword id="KW-0025">Alternative splicing</keyword>
<keyword id="KW-0040">ANK repeat</keyword>
<keyword id="KW-0539">Nucleus</keyword>
<keyword id="KW-1267">Proteomics identification</keyword>
<keyword id="KW-1185">Reference proteome</keyword>
<keyword id="KW-0677">Repeat</keyword>
<keyword id="KW-0804">Transcription</keyword>
<keyword id="KW-0805">Transcription regulation</keyword>
<gene>
    <name type="primary">CAMTA2</name>
    <name type="synonym">KIAA0909</name>
</gene>
<protein>
    <recommendedName>
        <fullName>Calmodulin-binding transcription activator 2</fullName>
    </recommendedName>
</protein>
<evidence type="ECO:0000255" key="1">
    <source>
        <dbReference type="PROSITE-ProRule" id="PRU00116"/>
    </source>
</evidence>
<evidence type="ECO:0000255" key="2">
    <source>
        <dbReference type="PROSITE-ProRule" id="PRU00767"/>
    </source>
</evidence>
<evidence type="ECO:0000256" key="3">
    <source>
        <dbReference type="SAM" id="MobiDB-lite"/>
    </source>
</evidence>
<evidence type="ECO:0000269" key="4">
    <source>
    </source>
</evidence>
<evidence type="ECO:0000269" key="5">
    <source>
    </source>
</evidence>
<evidence type="ECO:0000269" key="6">
    <source>
    </source>
</evidence>
<evidence type="ECO:0000269" key="7">
    <source>
    </source>
</evidence>
<evidence type="ECO:0000269" key="8">
    <source ref="4"/>
</evidence>
<evidence type="ECO:0000303" key="9">
    <source>
    </source>
</evidence>
<evidence type="ECO:0000303" key="10">
    <source>
    </source>
</evidence>
<evidence type="ECO:0000305" key="11"/>
<evidence type="ECO:0000305" key="12">
    <source>
    </source>
</evidence>
<reference key="1">
    <citation type="journal article" date="1998" name="DNA Res.">
        <title>Prediction of the coding sequences of unidentified human genes. XII. The complete sequences of 100 new cDNA clones from brain which code for large proteins in vitro.</title>
        <authorList>
            <person name="Nagase T."/>
            <person name="Ishikawa K."/>
            <person name="Suyama M."/>
            <person name="Kikuno R."/>
            <person name="Hirosawa M."/>
            <person name="Miyajima N."/>
            <person name="Tanaka A."/>
            <person name="Kotani H."/>
            <person name="Nomura N."/>
            <person name="Ohara O."/>
        </authorList>
    </citation>
    <scope>NUCLEOTIDE SEQUENCE [LARGE SCALE MRNA] (ISOFORM 1)</scope>
    <scope>VARIANTS PRO-267 AND PRO-903</scope>
    <source>
        <tissue>Brain</tissue>
    </source>
</reference>
<reference key="2">
    <citation type="journal article" date="2007" name="BMC Genomics">
        <title>The full-ORF clone resource of the German cDNA consortium.</title>
        <authorList>
            <person name="Bechtel S."/>
            <person name="Rosenfelder H."/>
            <person name="Duda A."/>
            <person name="Schmidt C.P."/>
            <person name="Ernst U."/>
            <person name="Wellenreuther R."/>
            <person name="Mehrle A."/>
            <person name="Schuster C."/>
            <person name="Bahr A."/>
            <person name="Bloecker H."/>
            <person name="Heubner D."/>
            <person name="Hoerlein A."/>
            <person name="Michel G."/>
            <person name="Wedler H."/>
            <person name="Koehrer K."/>
            <person name="Ottenwaelder B."/>
            <person name="Poustka A."/>
            <person name="Wiemann S."/>
            <person name="Schupp I."/>
        </authorList>
    </citation>
    <scope>NUCLEOTIDE SEQUENCE [LARGE SCALE MRNA] (ISOFORMS 3 AND 4)</scope>
    <scope>VARIANTS PRO-267 AND PRO-903</scope>
    <source>
        <tissue>Amygdala</tissue>
        <tissue>Brain</tissue>
    </source>
</reference>
<reference key="3">
    <citation type="journal article" date="2006" name="Nature">
        <title>DNA sequence of human chromosome 17 and analysis of rearrangement in the human lineage.</title>
        <authorList>
            <person name="Zody M.C."/>
            <person name="Garber M."/>
            <person name="Adams D.J."/>
            <person name="Sharpe T."/>
            <person name="Harrow J."/>
            <person name="Lupski J.R."/>
            <person name="Nicholson C."/>
            <person name="Searle S.M."/>
            <person name="Wilming L."/>
            <person name="Young S.K."/>
            <person name="Abouelleil A."/>
            <person name="Allen N.R."/>
            <person name="Bi W."/>
            <person name="Bloom T."/>
            <person name="Borowsky M.L."/>
            <person name="Bugalter B.E."/>
            <person name="Butler J."/>
            <person name="Chang J.L."/>
            <person name="Chen C.-K."/>
            <person name="Cook A."/>
            <person name="Corum B."/>
            <person name="Cuomo C.A."/>
            <person name="de Jong P.J."/>
            <person name="DeCaprio D."/>
            <person name="Dewar K."/>
            <person name="FitzGerald M."/>
            <person name="Gilbert J."/>
            <person name="Gibson R."/>
            <person name="Gnerre S."/>
            <person name="Goldstein S."/>
            <person name="Grafham D.V."/>
            <person name="Grocock R."/>
            <person name="Hafez N."/>
            <person name="Hagopian D.S."/>
            <person name="Hart E."/>
            <person name="Norman C.H."/>
            <person name="Humphray S."/>
            <person name="Jaffe D.B."/>
            <person name="Jones M."/>
            <person name="Kamal M."/>
            <person name="Khodiyar V.K."/>
            <person name="LaButti K."/>
            <person name="Laird G."/>
            <person name="Lehoczky J."/>
            <person name="Liu X."/>
            <person name="Lokyitsang T."/>
            <person name="Loveland J."/>
            <person name="Lui A."/>
            <person name="Macdonald P."/>
            <person name="Major J.E."/>
            <person name="Matthews L."/>
            <person name="Mauceli E."/>
            <person name="McCarroll S.A."/>
            <person name="Mihalev A.H."/>
            <person name="Mudge J."/>
            <person name="Nguyen C."/>
            <person name="Nicol R."/>
            <person name="O'Leary S.B."/>
            <person name="Osoegawa K."/>
            <person name="Schwartz D.C."/>
            <person name="Shaw-Smith C."/>
            <person name="Stankiewicz P."/>
            <person name="Steward C."/>
            <person name="Swarbreck D."/>
            <person name="Venkataraman V."/>
            <person name="Whittaker C.A."/>
            <person name="Yang X."/>
            <person name="Zimmer A.R."/>
            <person name="Bradley A."/>
            <person name="Hubbard T."/>
            <person name="Birren B.W."/>
            <person name="Rogers J."/>
            <person name="Lander E.S."/>
            <person name="Nusbaum C."/>
        </authorList>
    </citation>
    <scope>NUCLEOTIDE SEQUENCE [LARGE SCALE GENOMIC DNA]</scope>
</reference>
<reference key="4">
    <citation type="submission" date="2005-09" db="EMBL/GenBank/DDBJ databases">
        <authorList>
            <person name="Mural R.J."/>
            <person name="Istrail S."/>
            <person name="Sutton G.G."/>
            <person name="Florea L."/>
            <person name="Halpern A.L."/>
            <person name="Mobarry C.M."/>
            <person name="Lippert R."/>
            <person name="Walenz B."/>
            <person name="Shatkay H."/>
            <person name="Dew I."/>
            <person name="Miller J.R."/>
            <person name="Flanigan M.J."/>
            <person name="Edwards N.J."/>
            <person name="Bolanos R."/>
            <person name="Fasulo D."/>
            <person name="Halldorsson B.V."/>
            <person name="Hannenhalli S."/>
            <person name="Turner R."/>
            <person name="Yooseph S."/>
            <person name="Lu F."/>
            <person name="Nusskern D.R."/>
            <person name="Shue B.C."/>
            <person name="Zheng X.H."/>
            <person name="Zhong F."/>
            <person name="Delcher A.L."/>
            <person name="Huson D.H."/>
            <person name="Kravitz S.A."/>
            <person name="Mouchard L."/>
            <person name="Reinert K."/>
            <person name="Remington K.A."/>
            <person name="Clark A.G."/>
            <person name="Waterman M.S."/>
            <person name="Eichler E.E."/>
            <person name="Adams M.D."/>
            <person name="Hunkapiller M.W."/>
            <person name="Myers E.W."/>
            <person name="Venter J.C."/>
        </authorList>
    </citation>
    <scope>NUCLEOTIDE SEQUENCE [LARGE SCALE GENOMIC DNA]</scope>
    <scope>VARIANT PRO-267</scope>
</reference>
<reference key="5">
    <citation type="journal article" date="2004" name="Genome Res.">
        <title>The status, quality, and expansion of the NIH full-length cDNA project: the Mammalian Gene Collection (MGC).</title>
        <authorList>
            <consortium name="The MGC Project Team"/>
        </authorList>
    </citation>
    <scope>NUCLEOTIDE SEQUENCE [LARGE SCALE MRNA] (ISOFORMS 1; 5 AND 6)</scope>
    <scope>NUCLEOTIDE SEQUENCE [LARGE SCALE MRNA] OF 485-1202 (ISOFORM 2)</scope>
    <source>
        <tissue>Eye</tissue>
        <tissue>Placenta</tissue>
    </source>
</reference>
<reference key="6">
    <citation type="journal article" date="2002" name="J. Biol. Chem.">
        <title>A novel family of calmodulin-binding transcription activators in multicellular organisms.</title>
        <authorList>
            <person name="Bouche N."/>
            <person name="Scharlat A."/>
            <person name="Snedden W."/>
            <person name="Bouchez D."/>
            <person name="Fromm H."/>
        </authorList>
    </citation>
    <scope>FUNCTION</scope>
    <scope>TISSUE SPECIFICITY</scope>
    <scope>SUBUNIT</scope>
    <scope>SUBCELLULAR LOCATION</scope>
</reference>
<reference key="7">
    <citation type="journal article" date="2004" name="Int. J. Oncol.">
        <title>Cell cycle-dependent transcriptional regulation of calmodulin-binding transcription activator 1 in neuroblastoma cells.</title>
        <authorList>
            <person name="Nakatani K."/>
            <person name="Nishioka J."/>
            <person name="Itakura T."/>
            <person name="Nakanishi Y."/>
            <person name="Horinouchi J."/>
            <person name="Abe Y."/>
            <person name="Wada H."/>
            <person name="Nobori T."/>
        </authorList>
    </citation>
    <scope>ALTERNATIVE SPLICING</scope>
    <scope>TISSUE SPECIFICITY</scope>
</reference>
<sequence length="1202" mass="131530">MNTKDTTEVAENSHHLKIFLPKKLLECLPRCPLLPPERLRWNTNEEIASYLITFEKHDEWLSCAPKTRPQNGSIILYNRKKVKYRKDGYLWKKRKDGKTTREDHMKLKVQGMECLYGCYVHSSIVPTFHRRCYWLLQNPDIVLVHYLNVPALEDCGKGCSPIFCSISSDRREWLKWSREELLGQLKPMFHGIKWSCGNGTEEFSVEHLVQQILDTHPTKPAPRTHACLCSGGLGSGSLTHKCSSTKHRIISPKVEPRALTLTSIPHAHPPEPPPLIAPLPPELPKAHTSPSSSSSSSSSGFAEPLEIRPSPPTSRGGSSRGGTAILLLTGLEQRAGGLTPTRHLAPQADPRPSMSLAVVVGTEPSAPPAPPSPAFDPDRFLNSPQRGQTYGGGQGVSPDFPEAEAAHTPCSALEPAAALEPQAAARGPPPQSVAGGRRGNCFFIQDDDSGEELKGHGAAPPIPSPPPSPPPSPAPLEPSSRVGRGEALFGGPVGASELEPFSLSSFPDLMGELISDEAPSIPAPTPQLSPALSTITDFSPEWSYPEGGVKVLITGPWTEAAEHYSCVFDHIAVPASLVQPGVLRCYCPAHEVGLVSLQVAGREGPLSASVLFEYRARRFLSLPSTQLDWLSLDDNQFRMSILERLEQMEKRMAEIAAAGQVPCQGPDAPPVQDEGQGPGFEARVVVLVESMIPRSTWKGPERLAHGSPFRGMSLLHLAAAQGYARLIETLSQWRSVETGSLDLEQEVDPLNVDHFSCTPLMWACALGHLEAAVLLFRWNRQALSIPDSLGRLPLSVAHSRGHVRLARCLEELQRQEPSVEPPFALSPPSSSPDTGLSSVSSPSELSDGTFSVTSAYSSAPDGSPPPAPLPASEMTMEDMAPGQLSSGVPEAPLLLMDYEATNSKGPLSSLPALPPASDDGAAPEDADSPQAVDVIPVDMISLAKQIIEATPERIKREDFVGLPEAGASMRERTGAVGLSETMSWLASYLENVDHFPSSTPPSELPFERGRLAVPSAPSWAEFLSASTSGKMESDFALLTLSDHEQRELYEAARVIQTAFRKYKGRRLKEQQEVAAAVIQRCYRKYKQLTWIALKFALYKKMTQAAILIQSKFRSYYEQKRFQQSRRAAVLIQQHYRSYRRRPGPPHRTSATLPARNKGSFLTKKQDQAARKIMRFLRRCRHRMRELKQNQELEGLPQPGLAT</sequence>
<accession>O94983</accession>
<accession>B9EGL0</accession>
<accession>D3DTL5</accession>
<accession>E7EWU5</accession>
<accession>Q7Z6M8</accession>
<accession>Q8N3V0</accession>
<accession>Q8NDG4</accession>
<accession>Q96G17</accession>
<dbReference type="EMBL" id="AB020716">
    <property type="protein sequence ID" value="BAA74932.1"/>
    <property type="status" value="ALT_INIT"/>
    <property type="molecule type" value="mRNA"/>
</dbReference>
<dbReference type="EMBL" id="AL833974">
    <property type="protein sequence ID" value="CAD38818.2"/>
    <property type="molecule type" value="mRNA"/>
</dbReference>
<dbReference type="EMBL" id="AL831849">
    <property type="protein sequence ID" value="CAD38553.1"/>
    <property type="molecule type" value="mRNA"/>
</dbReference>
<dbReference type="EMBL" id="AC004771">
    <property type="status" value="NOT_ANNOTATED_CDS"/>
    <property type="molecule type" value="Genomic_DNA"/>
</dbReference>
<dbReference type="EMBL" id="CH471108">
    <property type="protein sequence ID" value="EAW90372.1"/>
    <property type="molecule type" value="Genomic_DNA"/>
</dbReference>
<dbReference type="EMBL" id="CH471108">
    <property type="protein sequence ID" value="EAW90373.1"/>
    <property type="molecule type" value="Genomic_DNA"/>
</dbReference>
<dbReference type="EMBL" id="BC010050">
    <property type="protein sequence ID" value="AAH10050.2"/>
    <property type="molecule type" value="mRNA"/>
</dbReference>
<dbReference type="EMBL" id="BC016163">
    <property type="protein sequence ID" value="AAH16163.1"/>
    <property type="status" value="ALT_FRAME"/>
    <property type="molecule type" value="mRNA"/>
</dbReference>
<dbReference type="EMBL" id="BC136534">
    <property type="protein sequence ID" value="AAI36535.1"/>
    <property type="molecule type" value="mRNA"/>
</dbReference>
<dbReference type="EMBL" id="BC142606">
    <property type="status" value="NOT_ANNOTATED_CDS"/>
    <property type="molecule type" value="mRNA"/>
</dbReference>
<dbReference type="CCDS" id="CCDS11063.1">
    <molecule id="O94983-1"/>
</dbReference>
<dbReference type="CCDS" id="CCDS54071.1">
    <molecule id="O94983-4"/>
</dbReference>
<dbReference type="CCDS" id="CCDS54072.1">
    <molecule id="O94983-6"/>
</dbReference>
<dbReference type="CCDS" id="CCDS54073.1">
    <molecule id="O94983-3"/>
</dbReference>
<dbReference type="RefSeq" id="NP_001164637.1">
    <molecule id="O94983-3"/>
    <property type="nucleotide sequence ID" value="NM_001171166.2"/>
</dbReference>
<dbReference type="RefSeq" id="NP_001164638.1">
    <molecule id="O94983-6"/>
    <property type="nucleotide sequence ID" value="NM_001171167.2"/>
</dbReference>
<dbReference type="RefSeq" id="NP_001164639.1">
    <molecule id="O94983-4"/>
    <property type="nucleotide sequence ID" value="NM_001171168.2"/>
</dbReference>
<dbReference type="RefSeq" id="NP_055914.2">
    <molecule id="O94983-1"/>
    <property type="nucleotide sequence ID" value="NM_015099.3"/>
</dbReference>
<dbReference type="SMR" id="O94983"/>
<dbReference type="BioGRID" id="116744">
    <property type="interactions" value="18"/>
</dbReference>
<dbReference type="FunCoup" id="O94983">
    <property type="interactions" value="1293"/>
</dbReference>
<dbReference type="IntAct" id="O94983">
    <property type="interactions" value="21"/>
</dbReference>
<dbReference type="MINT" id="O94983"/>
<dbReference type="STRING" id="9606.ENSP00000412886"/>
<dbReference type="GlyGen" id="O94983">
    <property type="glycosylation" value="1 site"/>
</dbReference>
<dbReference type="iPTMnet" id="O94983"/>
<dbReference type="PhosphoSitePlus" id="O94983"/>
<dbReference type="BioMuta" id="CAMTA2"/>
<dbReference type="jPOST" id="O94983"/>
<dbReference type="MassIVE" id="O94983"/>
<dbReference type="PaxDb" id="9606-ENSP00000412886"/>
<dbReference type="PeptideAtlas" id="O94983"/>
<dbReference type="ProteomicsDB" id="18913"/>
<dbReference type="ProteomicsDB" id="50603">
    <molecule id="O94983-1"/>
</dbReference>
<dbReference type="ProteomicsDB" id="50604">
    <molecule id="O94983-2"/>
</dbReference>
<dbReference type="ProteomicsDB" id="50605">
    <molecule id="O94983-3"/>
</dbReference>
<dbReference type="ProteomicsDB" id="50606">
    <molecule id="O94983-4"/>
</dbReference>
<dbReference type="ProteomicsDB" id="50607">
    <molecule id="O94983-5"/>
</dbReference>
<dbReference type="Antibodypedia" id="53152">
    <property type="antibodies" value="29 antibodies from 18 providers"/>
</dbReference>
<dbReference type="DNASU" id="23125"/>
<dbReference type="Ensembl" id="ENST00000348066.8">
    <molecule id="O94983-1"/>
    <property type="protein sequence ID" value="ENSP00000321813.7"/>
    <property type="gene ID" value="ENSG00000108509.21"/>
</dbReference>
<dbReference type="Ensembl" id="ENST00000361571.9">
    <molecule id="O94983-4"/>
    <property type="protein sequence ID" value="ENSP00000354828.5"/>
    <property type="gene ID" value="ENSG00000108509.21"/>
</dbReference>
<dbReference type="Ensembl" id="ENST00000381311.9">
    <molecule id="O94983-3"/>
    <property type="protein sequence ID" value="ENSP00000370712.5"/>
    <property type="gene ID" value="ENSG00000108509.21"/>
</dbReference>
<dbReference type="Ensembl" id="ENST00000414043.7">
    <molecule id="O94983-6"/>
    <property type="protein sequence ID" value="ENSP00000412886.3"/>
    <property type="gene ID" value="ENSG00000108509.21"/>
</dbReference>
<dbReference type="GeneID" id="23125"/>
<dbReference type="KEGG" id="hsa:23125"/>
<dbReference type="MANE-Select" id="ENST00000348066.8">
    <property type="protein sequence ID" value="ENSP00000321813.7"/>
    <property type="RefSeq nucleotide sequence ID" value="NM_015099.4"/>
    <property type="RefSeq protein sequence ID" value="NP_055914.2"/>
</dbReference>
<dbReference type="UCSC" id="uc002gag.3">
    <molecule id="O94983-1"/>
    <property type="organism name" value="human"/>
</dbReference>
<dbReference type="AGR" id="HGNC:18807"/>
<dbReference type="CTD" id="23125"/>
<dbReference type="DisGeNET" id="23125"/>
<dbReference type="GeneCards" id="CAMTA2"/>
<dbReference type="HGNC" id="HGNC:18807">
    <property type="gene designation" value="CAMTA2"/>
</dbReference>
<dbReference type="HPA" id="ENSG00000108509">
    <property type="expression patterns" value="Tissue enhanced (brain)"/>
</dbReference>
<dbReference type="MalaCards" id="CAMTA2"/>
<dbReference type="MIM" id="611508">
    <property type="type" value="gene"/>
</dbReference>
<dbReference type="neXtProt" id="NX_O94983"/>
<dbReference type="OpenTargets" id="ENSG00000108509"/>
<dbReference type="PharmGKB" id="PA38689"/>
<dbReference type="VEuPathDB" id="HostDB:ENSG00000108509"/>
<dbReference type="eggNOG" id="KOG0520">
    <property type="taxonomic scope" value="Eukaryota"/>
</dbReference>
<dbReference type="GeneTree" id="ENSGT00940000160105"/>
<dbReference type="HOGENOM" id="CLU_003170_2_0_1"/>
<dbReference type="InParanoid" id="O94983"/>
<dbReference type="OMA" id="VQLYSNP"/>
<dbReference type="OrthoDB" id="407555at2759"/>
<dbReference type="PAN-GO" id="O94983">
    <property type="GO annotations" value="4 GO annotations based on evolutionary models"/>
</dbReference>
<dbReference type="PhylomeDB" id="O94983"/>
<dbReference type="TreeFam" id="TF323452"/>
<dbReference type="PathwayCommons" id="O94983"/>
<dbReference type="SignaLink" id="O94983"/>
<dbReference type="BioGRID-ORCS" id="23125">
    <property type="hits" value="13 hits in 1180 CRISPR screens"/>
</dbReference>
<dbReference type="ChiTaRS" id="CAMTA2">
    <property type="organism name" value="human"/>
</dbReference>
<dbReference type="GenomeRNAi" id="23125"/>
<dbReference type="Pharos" id="O94983">
    <property type="development level" value="Tbio"/>
</dbReference>
<dbReference type="PRO" id="PR:O94983"/>
<dbReference type="Proteomes" id="UP000005640">
    <property type="component" value="Chromosome 17"/>
</dbReference>
<dbReference type="RNAct" id="O94983">
    <property type="molecule type" value="protein"/>
</dbReference>
<dbReference type="Bgee" id="ENSG00000108509">
    <property type="expression patterns" value="Expressed in right hemisphere of cerebellum and 158 other cell types or tissues"/>
</dbReference>
<dbReference type="ExpressionAtlas" id="O94983">
    <property type="expression patterns" value="baseline and differential"/>
</dbReference>
<dbReference type="GO" id="GO:0000785">
    <property type="term" value="C:chromatin"/>
    <property type="evidence" value="ECO:0000314"/>
    <property type="project" value="ARUK-UCL"/>
</dbReference>
<dbReference type="GO" id="GO:0005634">
    <property type="term" value="C:nucleus"/>
    <property type="evidence" value="ECO:0000314"/>
    <property type="project" value="MGI"/>
</dbReference>
<dbReference type="GO" id="GO:0003682">
    <property type="term" value="F:chromatin binding"/>
    <property type="evidence" value="ECO:0000314"/>
    <property type="project" value="MGI"/>
</dbReference>
<dbReference type="GO" id="GO:0003690">
    <property type="term" value="F:double-stranded DNA binding"/>
    <property type="evidence" value="ECO:0000318"/>
    <property type="project" value="GO_Central"/>
</dbReference>
<dbReference type="GO" id="GO:0042826">
    <property type="term" value="F:histone deacetylase binding"/>
    <property type="evidence" value="ECO:0000314"/>
    <property type="project" value="MGI"/>
</dbReference>
<dbReference type="GO" id="GO:0043565">
    <property type="term" value="F:sequence-specific DNA binding"/>
    <property type="evidence" value="ECO:0007669"/>
    <property type="project" value="Ensembl"/>
</dbReference>
<dbReference type="GO" id="GO:0003713">
    <property type="term" value="F:transcription coactivator activity"/>
    <property type="evidence" value="ECO:0000314"/>
    <property type="project" value="ARUK-UCL"/>
</dbReference>
<dbReference type="GO" id="GO:0003712">
    <property type="term" value="F:transcription coregulator activity"/>
    <property type="evidence" value="ECO:0000318"/>
    <property type="project" value="GO_Central"/>
</dbReference>
<dbReference type="GO" id="GO:0014898">
    <property type="term" value="P:cardiac muscle hypertrophy in response to stress"/>
    <property type="evidence" value="ECO:0000314"/>
    <property type="project" value="MGI"/>
</dbReference>
<dbReference type="GO" id="GO:0045944">
    <property type="term" value="P:positive regulation of transcription by RNA polymerase II"/>
    <property type="evidence" value="ECO:0000316"/>
    <property type="project" value="MGI"/>
</dbReference>
<dbReference type="GO" id="GO:0006357">
    <property type="term" value="P:regulation of transcription by RNA polymerase II"/>
    <property type="evidence" value="ECO:0000314"/>
    <property type="project" value="MGI"/>
</dbReference>
<dbReference type="FunFam" id="1.20.5.190:FF:000004">
    <property type="entry name" value="calmodulin-binding transcription activator 2 isoform X1"/>
    <property type="match status" value="1"/>
</dbReference>
<dbReference type="FunFam" id="1.25.40.20:FF:000015">
    <property type="entry name" value="calmodulin-binding transcription activator 2 isoform X1"/>
    <property type="match status" value="1"/>
</dbReference>
<dbReference type="FunFam" id="2.60.40.10:FF:000089">
    <property type="entry name" value="calmodulin-binding transcription activator 2 isoform X1"/>
    <property type="match status" value="1"/>
</dbReference>
<dbReference type="Gene3D" id="1.20.5.190">
    <property type="match status" value="2"/>
</dbReference>
<dbReference type="Gene3D" id="1.25.40.20">
    <property type="entry name" value="Ankyrin repeat-containing domain"/>
    <property type="match status" value="1"/>
</dbReference>
<dbReference type="Gene3D" id="2.60.40.10">
    <property type="entry name" value="Immunoglobulins"/>
    <property type="match status" value="1"/>
</dbReference>
<dbReference type="InterPro" id="IPR036770">
    <property type="entry name" value="Ankyrin_rpt-contain_sf"/>
</dbReference>
<dbReference type="InterPro" id="IPR005559">
    <property type="entry name" value="CG-1_dom"/>
</dbReference>
<dbReference type="InterPro" id="IPR013783">
    <property type="entry name" value="Ig-like_fold"/>
</dbReference>
<dbReference type="InterPro" id="IPR014756">
    <property type="entry name" value="Ig_E-set"/>
</dbReference>
<dbReference type="InterPro" id="IPR002909">
    <property type="entry name" value="IPT_dom"/>
</dbReference>
<dbReference type="PANTHER" id="PTHR23335:SF9">
    <property type="entry name" value="CALMODULIN-BINDING TRANSCRIPTION ACTIVATOR 2"/>
    <property type="match status" value="1"/>
</dbReference>
<dbReference type="PANTHER" id="PTHR23335">
    <property type="entry name" value="CALMODULIN-BINDING TRANSCRIPTION ACTIVATOR CAMTA"/>
    <property type="match status" value="1"/>
</dbReference>
<dbReference type="Pfam" id="PF03859">
    <property type="entry name" value="CG-1"/>
    <property type="match status" value="1"/>
</dbReference>
<dbReference type="Pfam" id="PF01833">
    <property type="entry name" value="TIG"/>
    <property type="match status" value="1"/>
</dbReference>
<dbReference type="SMART" id="SM01076">
    <property type="entry name" value="CG-1"/>
    <property type="match status" value="1"/>
</dbReference>
<dbReference type="SUPFAM" id="SSF48403">
    <property type="entry name" value="Ankyrin repeat"/>
    <property type="match status" value="1"/>
</dbReference>
<dbReference type="SUPFAM" id="SSF81296">
    <property type="entry name" value="E set domains"/>
    <property type="match status" value="1"/>
</dbReference>
<dbReference type="PROSITE" id="PS50297">
    <property type="entry name" value="ANK_REP_REGION"/>
    <property type="match status" value="1"/>
</dbReference>
<dbReference type="PROSITE" id="PS51437">
    <property type="entry name" value="CG_1"/>
    <property type="match status" value="1"/>
</dbReference>
<dbReference type="PROSITE" id="PS50096">
    <property type="entry name" value="IQ"/>
    <property type="match status" value="1"/>
</dbReference>
<proteinExistence type="evidence at protein level"/>